<gene>
    <name evidence="1" type="primary">asd</name>
    <name type="ordered locus">BSU16750</name>
</gene>
<organism>
    <name type="scientific">Bacillus subtilis (strain 168)</name>
    <dbReference type="NCBI Taxonomy" id="224308"/>
    <lineage>
        <taxon>Bacteria</taxon>
        <taxon>Bacillati</taxon>
        <taxon>Bacillota</taxon>
        <taxon>Bacilli</taxon>
        <taxon>Bacillales</taxon>
        <taxon>Bacillaceae</taxon>
        <taxon>Bacillus</taxon>
    </lineage>
</organism>
<proteinExistence type="evidence at protein level"/>
<protein>
    <recommendedName>
        <fullName evidence="1">Aspartate-semialdehyde dehydrogenase</fullName>
        <shortName evidence="1">ASA dehydrogenase</shortName>
        <shortName evidence="1">ASADH</shortName>
        <ecNumber evidence="1">1.2.1.11</ecNumber>
    </recommendedName>
    <alternativeName>
        <fullName evidence="1">Aspartate-beta-semialdehyde dehydrogenase</fullName>
    </alternativeName>
</protein>
<evidence type="ECO:0000255" key="1">
    <source>
        <dbReference type="HAMAP-Rule" id="MF_02121"/>
    </source>
</evidence>
<evidence type="ECO:0000269" key="2">
    <source>
    </source>
</evidence>
<evidence type="ECO:0000305" key="3"/>
<dbReference type="EC" id="1.2.1.11" evidence="1"/>
<dbReference type="EMBL" id="L08471">
    <property type="protein sequence ID" value="AAA22383.1"/>
    <property type="molecule type" value="Genomic_DNA"/>
</dbReference>
<dbReference type="EMBL" id="AL009126">
    <property type="protein sequence ID" value="CAB13548.1"/>
    <property type="molecule type" value="Genomic_DNA"/>
</dbReference>
<dbReference type="EMBL" id="Z22554">
    <property type="protein sequence ID" value="CAA80276.1"/>
    <property type="molecule type" value="Genomic_DNA"/>
</dbReference>
<dbReference type="PIR" id="F69590">
    <property type="entry name" value="F69590"/>
</dbReference>
<dbReference type="RefSeq" id="NP_389557.1">
    <property type="nucleotide sequence ID" value="NC_000964.3"/>
</dbReference>
<dbReference type="RefSeq" id="WP_003244674.1">
    <property type="nucleotide sequence ID" value="NZ_OZ025638.1"/>
</dbReference>
<dbReference type="SMR" id="Q04797"/>
<dbReference type="FunCoup" id="Q04797">
    <property type="interactions" value="655"/>
</dbReference>
<dbReference type="IntAct" id="Q04797">
    <property type="interactions" value="1"/>
</dbReference>
<dbReference type="MINT" id="Q04797"/>
<dbReference type="STRING" id="224308.BSU16750"/>
<dbReference type="iPTMnet" id="Q04797"/>
<dbReference type="jPOST" id="Q04797"/>
<dbReference type="PaxDb" id="224308-BSU16750"/>
<dbReference type="EnsemblBacteria" id="CAB13548">
    <property type="protein sequence ID" value="CAB13548"/>
    <property type="gene ID" value="BSU_16750"/>
</dbReference>
<dbReference type="GeneID" id="939654"/>
<dbReference type="KEGG" id="bsu:BSU16750"/>
<dbReference type="PATRIC" id="fig|224308.179.peg.1817"/>
<dbReference type="eggNOG" id="COG0136">
    <property type="taxonomic scope" value="Bacteria"/>
</dbReference>
<dbReference type="InParanoid" id="Q04797"/>
<dbReference type="OrthoDB" id="9805684at2"/>
<dbReference type="PhylomeDB" id="Q04797"/>
<dbReference type="BioCyc" id="BSUB:BSU16750-MONOMER"/>
<dbReference type="BioCyc" id="MetaCyc:MONOMER-6564"/>
<dbReference type="SABIO-RK" id="Q04797"/>
<dbReference type="UniPathway" id="UPA00034">
    <property type="reaction ID" value="UER00016"/>
</dbReference>
<dbReference type="UniPathway" id="UPA00050">
    <property type="reaction ID" value="UER00463"/>
</dbReference>
<dbReference type="UniPathway" id="UPA00051">
    <property type="reaction ID" value="UER00464"/>
</dbReference>
<dbReference type="Proteomes" id="UP000001570">
    <property type="component" value="Chromosome"/>
</dbReference>
<dbReference type="GO" id="GO:0004073">
    <property type="term" value="F:aspartate-semialdehyde dehydrogenase activity"/>
    <property type="evidence" value="ECO:0007669"/>
    <property type="project" value="UniProtKB-UniRule"/>
</dbReference>
<dbReference type="GO" id="GO:0051287">
    <property type="term" value="F:NAD binding"/>
    <property type="evidence" value="ECO:0007669"/>
    <property type="project" value="InterPro"/>
</dbReference>
<dbReference type="GO" id="GO:0050661">
    <property type="term" value="F:NADP binding"/>
    <property type="evidence" value="ECO:0007669"/>
    <property type="project" value="UniProtKB-UniRule"/>
</dbReference>
<dbReference type="GO" id="GO:0046983">
    <property type="term" value="F:protein dimerization activity"/>
    <property type="evidence" value="ECO:0007669"/>
    <property type="project" value="InterPro"/>
</dbReference>
<dbReference type="GO" id="GO:0071266">
    <property type="term" value="P:'de novo' L-methionine biosynthetic process"/>
    <property type="evidence" value="ECO:0007669"/>
    <property type="project" value="UniProtKB-UniRule"/>
</dbReference>
<dbReference type="GO" id="GO:0019877">
    <property type="term" value="P:diaminopimelate biosynthetic process"/>
    <property type="evidence" value="ECO:0007669"/>
    <property type="project" value="UniProtKB-UniRule"/>
</dbReference>
<dbReference type="GO" id="GO:0009097">
    <property type="term" value="P:isoleucine biosynthetic process"/>
    <property type="evidence" value="ECO:0007669"/>
    <property type="project" value="InterPro"/>
</dbReference>
<dbReference type="GO" id="GO:0009089">
    <property type="term" value="P:lysine biosynthetic process via diaminopimelate"/>
    <property type="evidence" value="ECO:0007669"/>
    <property type="project" value="UniProtKB-UniRule"/>
</dbReference>
<dbReference type="GO" id="GO:0009088">
    <property type="term" value="P:threonine biosynthetic process"/>
    <property type="evidence" value="ECO:0007669"/>
    <property type="project" value="UniProtKB-UniRule"/>
</dbReference>
<dbReference type="CDD" id="cd18131">
    <property type="entry name" value="ASADH_C_bac_euk_like"/>
    <property type="match status" value="1"/>
</dbReference>
<dbReference type="CDD" id="cd02316">
    <property type="entry name" value="VcASADH2_like_N"/>
    <property type="match status" value="1"/>
</dbReference>
<dbReference type="Gene3D" id="3.30.360.10">
    <property type="entry name" value="Dihydrodipicolinate Reductase, domain 2"/>
    <property type="match status" value="1"/>
</dbReference>
<dbReference type="Gene3D" id="3.40.50.720">
    <property type="entry name" value="NAD(P)-binding Rossmann-like Domain"/>
    <property type="match status" value="1"/>
</dbReference>
<dbReference type="HAMAP" id="MF_02121">
    <property type="entry name" value="ASADH"/>
    <property type="match status" value="1"/>
</dbReference>
<dbReference type="InterPro" id="IPR000319">
    <property type="entry name" value="Asp-semialdehyde_DH_CS"/>
</dbReference>
<dbReference type="InterPro" id="IPR012080">
    <property type="entry name" value="Asp_semialdehyde_DH"/>
</dbReference>
<dbReference type="InterPro" id="IPR005986">
    <property type="entry name" value="Asp_semialdehyde_DH_beta"/>
</dbReference>
<dbReference type="InterPro" id="IPR036291">
    <property type="entry name" value="NAD(P)-bd_dom_sf"/>
</dbReference>
<dbReference type="InterPro" id="IPR000534">
    <property type="entry name" value="Semialdehyde_DH_NAD-bd"/>
</dbReference>
<dbReference type="InterPro" id="IPR012280">
    <property type="entry name" value="Semialdhyde_DH_dimer_dom"/>
</dbReference>
<dbReference type="NCBIfam" id="TIGR01296">
    <property type="entry name" value="asd_B"/>
    <property type="match status" value="1"/>
</dbReference>
<dbReference type="NCBIfam" id="NF011456">
    <property type="entry name" value="PRK14874.1"/>
    <property type="match status" value="1"/>
</dbReference>
<dbReference type="PANTHER" id="PTHR46278:SF2">
    <property type="entry name" value="ASPARTATE-SEMIALDEHYDE DEHYDROGENASE"/>
    <property type="match status" value="1"/>
</dbReference>
<dbReference type="PANTHER" id="PTHR46278">
    <property type="entry name" value="DEHYDROGENASE, PUTATIVE-RELATED"/>
    <property type="match status" value="1"/>
</dbReference>
<dbReference type="Pfam" id="PF01118">
    <property type="entry name" value="Semialdhyde_dh"/>
    <property type="match status" value="1"/>
</dbReference>
<dbReference type="Pfam" id="PF02774">
    <property type="entry name" value="Semialdhyde_dhC"/>
    <property type="match status" value="1"/>
</dbReference>
<dbReference type="PIRSF" id="PIRSF000148">
    <property type="entry name" value="ASA_dh"/>
    <property type="match status" value="1"/>
</dbReference>
<dbReference type="SMART" id="SM00859">
    <property type="entry name" value="Semialdhyde_dh"/>
    <property type="match status" value="1"/>
</dbReference>
<dbReference type="SUPFAM" id="SSF55347">
    <property type="entry name" value="Glyceraldehyde-3-phosphate dehydrogenase-like, C-terminal domain"/>
    <property type="match status" value="1"/>
</dbReference>
<dbReference type="SUPFAM" id="SSF51735">
    <property type="entry name" value="NAD(P)-binding Rossmann-fold domains"/>
    <property type="match status" value="1"/>
</dbReference>
<dbReference type="PROSITE" id="PS01103">
    <property type="entry name" value="ASD"/>
    <property type="match status" value="1"/>
</dbReference>
<accession>Q04797</accession>
<keyword id="KW-0028">Amino-acid biosynthesis</keyword>
<keyword id="KW-0220">Diaminopimelate biosynthesis</keyword>
<keyword id="KW-0457">Lysine biosynthesis</keyword>
<keyword id="KW-0486">Methionine biosynthesis</keyword>
<keyword id="KW-0521">NADP</keyword>
<keyword id="KW-0560">Oxidoreductase</keyword>
<keyword id="KW-0597">Phosphoprotein</keyword>
<keyword id="KW-1185">Reference proteome</keyword>
<keyword id="KW-0791">Threonine biosynthesis</keyword>
<comment type="function">
    <text evidence="1">Catalyzes the NADPH-dependent formation of L-aspartate-semialdehyde (L-ASA) by the reductive dephosphorylation of L-aspartyl-4-phosphate.</text>
</comment>
<comment type="catalytic activity">
    <reaction evidence="1">
        <text>L-aspartate 4-semialdehyde + phosphate + NADP(+) = 4-phospho-L-aspartate + NADPH + H(+)</text>
        <dbReference type="Rhea" id="RHEA:24284"/>
        <dbReference type="ChEBI" id="CHEBI:15378"/>
        <dbReference type="ChEBI" id="CHEBI:43474"/>
        <dbReference type="ChEBI" id="CHEBI:57535"/>
        <dbReference type="ChEBI" id="CHEBI:57783"/>
        <dbReference type="ChEBI" id="CHEBI:58349"/>
        <dbReference type="ChEBI" id="CHEBI:537519"/>
        <dbReference type="EC" id="1.2.1.11"/>
    </reaction>
</comment>
<comment type="pathway">
    <text evidence="1">Amino-acid biosynthesis; L-lysine biosynthesis via DAP pathway; (S)-tetrahydrodipicolinate from L-aspartate: step 2/4.</text>
</comment>
<comment type="pathway">
    <text evidence="1">Amino-acid biosynthesis; L-methionine biosynthesis via de novo pathway; L-homoserine from L-aspartate: step 2/3.</text>
</comment>
<comment type="pathway">
    <text evidence="1">Amino-acid biosynthesis; L-threonine biosynthesis; L-threonine from L-aspartate: step 2/5.</text>
</comment>
<comment type="subunit">
    <text evidence="1">Homodimer.</text>
</comment>
<comment type="similarity">
    <text evidence="1">Belongs to the aspartate-semialdehyde dehydrogenase family.</text>
</comment>
<name>DHAS_BACSU</name>
<feature type="chain" id="PRO_0000141361" description="Aspartate-semialdehyde dehydrogenase">
    <location>
        <begin position="1"/>
        <end position="346"/>
    </location>
</feature>
<feature type="active site" description="Acyl-thioester intermediate" evidence="1">
    <location>
        <position position="130"/>
    </location>
</feature>
<feature type="active site" description="Proton acceptor" evidence="1">
    <location>
        <position position="250"/>
    </location>
</feature>
<feature type="binding site" evidence="1">
    <location>
        <begin position="13"/>
        <end position="16"/>
    </location>
    <ligand>
        <name>NADP(+)</name>
        <dbReference type="ChEBI" id="CHEBI:58349"/>
    </ligand>
</feature>
<feature type="binding site" evidence="1">
    <location>
        <begin position="41"/>
        <end position="42"/>
    </location>
    <ligand>
        <name>NADP(+)</name>
        <dbReference type="ChEBI" id="CHEBI:58349"/>
    </ligand>
</feature>
<feature type="binding site" evidence="1">
    <location>
        <position position="101"/>
    </location>
    <ligand>
        <name>phosphate</name>
        <dbReference type="ChEBI" id="CHEBI:43474"/>
    </ligand>
</feature>
<feature type="binding site" evidence="1">
    <location>
        <position position="157"/>
    </location>
    <ligand>
        <name>substrate</name>
    </ligand>
</feature>
<feature type="binding site" evidence="1">
    <location>
        <begin position="160"/>
        <end position="161"/>
    </location>
    <ligand>
        <name>NADP(+)</name>
        <dbReference type="ChEBI" id="CHEBI:58349"/>
    </ligand>
</feature>
<feature type="binding site" evidence="1">
    <location>
        <position position="221"/>
    </location>
    <ligand>
        <name>phosphate</name>
        <dbReference type="ChEBI" id="CHEBI:43474"/>
    </ligand>
</feature>
<feature type="binding site" evidence="1">
    <location>
        <position position="243"/>
    </location>
    <ligand>
        <name>substrate</name>
    </ligand>
</feature>
<feature type="binding site" evidence="1">
    <location>
        <position position="324"/>
    </location>
    <ligand>
        <name>NADP(+)</name>
        <dbReference type="ChEBI" id="CHEBI:58349"/>
    </ligand>
</feature>
<feature type="modified residue" description="Phosphoserine" evidence="2">
    <location>
        <position position="98"/>
    </location>
</feature>
<feature type="modified residue" description="Phosphotyrosine" evidence="2">
    <location>
        <position position="146"/>
    </location>
</feature>
<feature type="sequence conflict" description="In Ref. 3; CAA80276." evidence="3" ref="3">
    <original>S</original>
    <variation>A</variation>
    <location>
        <position position="42"/>
    </location>
</feature>
<feature type="sequence conflict" description="In Ref. 3; CAA80276." evidence="3" ref="3">
    <original>S</original>
    <variation>T</variation>
    <location>
        <position position="77"/>
    </location>
</feature>
<sequence length="346" mass="37847">MGRGLHVAVVGATGAVGQQMLKTLEDRNFEMDTLTLLSSKRSAGTKVTFKGQELTVQEASPESFEGVNIALFSAGGSVSQALAPEAVKRGAIVIDNTSAFRMDENTPLVVPEVNEADLHEHNGIIANPNCSTIQMVAALEPIRKAYGLNKVIVSTYQAVSGAGNEAVKELYSQTQAILNKEEIEPEIMPVKGDKKHYQIAFNAIPQIDKFQDNGYTFEEMKMINETKKIMHMPDLQVAATCVRLPIQTGHSESVYIEIDRDDATVEDIKNLLKEAPGVTLQDDPSQQLYPMPADAVGKNDVFVGRIRKDLDRANGFHLWVVSDNLLKGAAWNSVQIAESLKKLNLV</sequence>
<reference key="1">
    <citation type="journal article" date="1993" name="J. Biol. Chem.">
        <title>Organization and nucleotide sequence of the Bacillus subtilis diaminopimelate operon, a cluster of genes encoding the first three enzymes of diaminopimelate synthesis and dipicolinate synthase.</title>
        <authorList>
            <person name="Chen N.-Y."/>
            <person name="Jiang S.-Q."/>
            <person name="Klein D.A."/>
            <person name="Paulus H."/>
        </authorList>
    </citation>
    <scope>NUCLEOTIDE SEQUENCE [GENOMIC DNA]</scope>
    <source>
        <strain>168</strain>
    </source>
</reference>
<reference key="2">
    <citation type="journal article" date="1997" name="Nature">
        <title>The complete genome sequence of the Gram-positive bacterium Bacillus subtilis.</title>
        <authorList>
            <person name="Kunst F."/>
            <person name="Ogasawara N."/>
            <person name="Moszer I."/>
            <person name="Albertini A.M."/>
            <person name="Alloni G."/>
            <person name="Azevedo V."/>
            <person name="Bertero M.G."/>
            <person name="Bessieres P."/>
            <person name="Bolotin A."/>
            <person name="Borchert S."/>
            <person name="Borriss R."/>
            <person name="Boursier L."/>
            <person name="Brans A."/>
            <person name="Braun M."/>
            <person name="Brignell S.C."/>
            <person name="Bron S."/>
            <person name="Brouillet S."/>
            <person name="Bruschi C.V."/>
            <person name="Caldwell B."/>
            <person name="Capuano V."/>
            <person name="Carter N.M."/>
            <person name="Choi S.-K."/>
            <person name="Codani J.-J."/>
            <person name="Connerton I.F."/>
            <person name="Cummings N.J."/>
            <person name="Daniel R.A."/>
            <person name="Denizot F."/>
            <person name="Devine K.M."/>
            <person name="Duesterhoeft A."/>
            <person name="Ehrlich S.D."/>
            <person name="Emmerson P.T."/>
            <person name="Entian K.-D."/>
            <person name="Errington J."/>
            <person name="Fabret C."/>
            <person name="Ferrari E."/>
            <person name="Foulger D."/>
            <person name="Fritz C."/>
            <person name="Fujita M."/>
            <person name="Fujita Y."/>
            <person name="Fuma S."/>
            <person name="Galizzi A."/>
            <person name="Galleron N."/>
            <person name="Ghim S.-Y."/>
            <person name="Glaser P."/>
            <person name="Goffeau A."/>
            <person name="Golightly E.J."/>
            <person name="Grandi G."/>
            <person name="Guiseppi G."/>
            <person name="Guy B.J."/>
            <person name="Haga K."/>
            <person name="Haiech J."/>
            <person name="Harwood C.R."/>
            <person name="Henaut A."/>
            <person name="Hilbert H."/>
            <person name="Holsappel S."/>
            <person name="Hosono S."/>
            <person name="Hullo M.-F."/>
            <person name="Itaya M."/>
            <person name="Jones L.-M."/>
            <person name="Joris B."/>
            <person name="Karamata D."/>
            <person name="Kasahara Y."/>
            <person name="Klaerr-Blanchard M."/>
            <person name="Klein C."/>
            <person name="Kobayashi Y."/>
            <person name="Koetter P."/>
            <person name="Koningstein G."/>
            <person name="Krogh S."/>
            <person name="Kumano M."/>
            <person name="Kurita K."/>
            <person name="Lapidus A."/>
            <person name="Lardinois S."/>
            <person name="Lauber J."/>
            <person name="Lazarevic V."/>
            <person name="Lee S.-M."/>
            <person name="Levine A."/>
            <person name="Liu H."/>
            <person name="Masuda S."/>
            <person name="Mauel C."/>
            <person name="Medigue C."/>
            <person name="Medina N."/>
            <person name="Mellado R.P."/>
            <person name="Mizuno M."/>
            <person name="Moestl D."/>
            <person name="Nakai S."/>
            <person name="Noback M."/>
            <person name="Noone D."/>
            <person name="O'Reilly M."/>
            <person name="Ogawa K."/>
            <person name="Ogiwara A."/>
            <person name="Oudega B."/>
            <person name="Park S.-H."/>
            <person name="Parro V."/>
            <person name="Pohl T.M."/>
            <person name="Portetelle D."/>
            <person name="Porwollik S."/>
            <person name="Prescott A.M."/>
            <person name="Presecan E."/>
            <person name="Pujic P."/>
            <person name="Purnelle B."/>
            <person name="Rapoport G."/>
            <person name="Rey M."/>
            <person name="Reynolds S."/>
            <person name="Rieger M."/>
            <person name="Rivolta C."/>
            <person name="Rocha E."/>
            <person name="Roche B."/>
            <person name="Rose M."/>
            <person name="Sadaie Y."/>
            <person name="Sato T."/>
            <person name="Scanlan E."/>
            <person name="Schleich S."/>
            <person name="Schroeter R."/>
            <person name="Scoffone F."/>
            <person name="Sekiguchi J."/>
            <person name="Sekowska A."/>
            <person name="Seror S.J."/>
            <person name="Serror P."/>
            <person name="Shin B.-S."/>
            <person name="Soldo B."/>
            <person name="Sorokin A."/>
            <person name="Tacconi E."/>
            <person name="Takagi T."/>
            <person name="Takahashi H."/>
            <person name="Takemaru K."/>
            <person name="Takeuchi M."/>
            <person name="Tamakoshi A."/>
            <person name="Tanaka T."/>
            <person name="Terpstra P."/>
            <person name="Tognoni A."/>
            <person name="Tosato V."/>
            <person name="Uchiyama S."/>
            <person name="Vandenbol M."/>
            <person name="Vannier F."/>
            <person name="Vassarotti A."/>
            <person name="Viari A."/>
            <person name="Wambutt R."/>
            <person name="Wedler E."/>
            <person name="Wedler H."/>
            <person name="Weitzenegger T."/>
            <person name="Winters P."/>
            <person name="Wipat A."/>
            <person name="Yamamoto H."/>
            <person name="Yamane K."/>
            <person name="Yasumoto K."/>
            <person name="Yata K."/>
            <person name="Yoshida K."/>
            <person name="Yoshikawa H.-F."/>
            <person name="Zumstein E."/>
            <person name="Yoshikawa H."/>
            <person name="Danchin A."/>
        </authorList>
    </citation>
    <scope>NUCLEOTIDE SEQUENCE [LARGE SCALE GENOMIC DNA]</scope>
    <source>
        <strain>168</strain>
    </source>
</reference>
<reference key="3">
    <citation type="journal article" date="1993" name="J. Mol. Biol.">
        <title>Cloning, DNA sequence, functional analysis and transcriptional regulation of the genes encoding dipicolinic acid synthetase required for sporulation in Bacillus subtilis.</title>
        <authorList>
            <person name="Daniel R.A."/>
            <person name="Errington J."/>
        </authorList>
    </citation>
    <scope>NUCLEOTIDE SEQUENCE [GENOMIC DNA] OF 1-208</scope>
</reference>
<reference key="4">
    <citation type="journal article" date="2007" name="Mol. Cell. Proteomics">
        <title>The serine/threonine/tyrosine phosphoproteome of the model bacterium Bacillus subtilis.</title>
        <authorList>
            <person name="Macek B."/>
            <person name="Mijakovic I."/>
            <person name="Olsen J.V."/>
            <person name="Gnad F."/>
            <person name="Kumar C."/>
            <person name="Jensen P.R."/>
            <person name="Mann M."/>
        </authorList>
    </citation>
    <scope>PHOSPHORYLATION [LARGE SCALE ANALYSIS] AT SER-98 AND TYR-146</scope>
    <scope>IDENTIFICATION BY MASS SPECTROMETRY</scope>
    <source>
        <strain>168</strain>
    </source>
</reference>